<feature type="chain" id="PRO_0000367098" description="Actin, cytoplasmic 1">
    <location>
        <begin position="1"/>
        <end position="375"/>
    </location>
</feature>
<feature type="initiator methionine" description="Removed; alternate" evidence="2">
    <location>
        <position position="1"/>
    </location>
</feature>
<feature type="chain" id="PRO_0000292338" description="Actin, cytoplasmic 1, N-terminally processed">
    <location>
        <begin position="2"/>
        <end position="375"/>
    </location>
</feature>
<feature type="modified residue" description="N-acetylmethionine; in Actin, cytoplasmic 1; alternate" evidence="2">
    <location>
        <position position="1"/>
    </location>
</feature>
<feature type="modified residue" description="N-acetylaspartate; in Actin, cytoplasmic 1, N-terminally processed" evidence="2">
    <location>
        <position position="2"/>
    </location>
</feature>
<feature type="modified residue" description="Methionine (R)-sulfoxide" evidence="4">
    <location>
        <position position="44"/>
    </location>
</feature>
<feature type="modified residue" description="Methionine (R)-sulfoxide" evidence="4">
    <location>
        <position position="47"/>
    </location>
</feature>
<accession>Q6NVA9</accession>
<proteinExistence type="evidence at transcript level"/>
<sequence>MDDDIAALVVDNGSGMCKAGFAGDDAPRAVFPSIVGRPRHQGVMVGMGQKDSYVGDEAQSKRGILTLKYPIEHGIVTNWDDMEKIWHHTFYNELRVAPEEHPVLLTEAPLNPKANREKMTQIMFETFNTPAMYVAIQAVLSLYASGRTTGIVMDSGDGVTHTVPIYEGYALPHAILRLDLAGRDLTDYLMKILTERGYSFTTTAEREIVRDIKEKLCYVALDFEQEMATAASSSSLEKSYELPDGQVITIGNERFRCPEALFQPSFLGMESCGIHETTYNSIMKCDVDIRKDLYANTVLSGGTTMYPGIADRMQKEITALAPSTMKIKIIAPPERKYSVWIGGSILASLSTFQQMWISKQEYDESGPSIVHRKCF</sequence>
<gene>
    <name type="primary">actb</name>
    <name type="ORF">TNeu072n05.1</name>
</gene>
<protein>
    <recommendedName>
        <fullName>Actin, cytoplasmic 1</fullName>
        <ecNumber evidence="5">3.6.4.-</ecNumber>
    </recommendedName>
    <alternativeName>
        <fullName>Beta-actin</fullName>
    </alternativeName>
    <component>
        <recommendedName>
            <fullName>Actin, cytoplasmic 1, N-terminally processed</fullName>
        </recommendedName>
    </component>
</protein>
<keyword id="KW-0007">Acetylation</keyword>
<keyword id="KW-0067">ATP-binding</keyword>
<keyword id="KW-0963">Cytoplasm</keyword>
<keyword id="KW-0206">Cytoskeleton</keyword>
<keyword id="KW-0378">Hydrolase</keyword>
<keyword id="KW-0488">Methylation</keyword>
<keyword id="KW-0547">Nucleotide-binding</keyword>
<keyword id="KW-0539">Nucleus</keyword>
<keyword id="KW-0558">Oxidation</keyword>
<keyword id="KW-1185">Reference proteome</keyword>
<name>ACTB_XENTR</name>
<reference key="1">
    <citation type="submission" date="2006-10" db="EMBL/GenBank/DDBJ databases">
        <authorList>
            <consortium name="Sanger Xenopus tropicalis EST/cDNA project"/>
        </authorList>
    </citation>
    <scope>NUCLEOTIDE SEQUENCE [LARGE SCALE MRNA]</scope>
    <source>
        <tissue>Neurula</tissue>
    </source>
</reference>
<reference key="2">
    <citation type="submission" date="2004-03" db="EMBL/GenBank/DDBJ databases">
        <authorList>
            <consortium name="NIH - Xenopus Gene Collection (XGC) project"/>
        </authorList>
    </citation>
    <scope>NUCLEOTIDE SEQUENCE [LARGE SCALE MRNA]</scope>
    <source>
        <tissue>Embryo</tissue>
    </source>
</reference>
<organism>
    <name type="scientific">Xenopus tropicalis</name>
    <name type="common">Western clawed frog</name>
    <name type="synonym">Silurana tropicalis</name>
    <dbReference type="NCBI Taxonomy" id="8364"/>
    <lineage>
        <taxon>Eukaryota</taxon>
        <taxon>Metazoa</taxon>
        <taxon>Chordata</taxon>
        <taxon>Craniata</taxon>
        <taxon>Vertebrata</taxon>
        <taxon>Euteleostomi</taxon>
        <taxon>Amphibia</taxon>
        <taxon>Batrachia</taxon>
        <taxon>Anura</taxon>
        <taxon>Pipoidea</taxon>
        <taxon>Pipidae</taxon>
        <taxon>Xenopodinae</taxon>
        <taxon>Xenopus</taxon>
        <taxon>Silurana</taxon>
    </lineage>
</organism>
<dbReference type="EC" id="3.6.4.-" evidence="5"/>
<dbReference type="EMBL" id="CR855434">
    <property type="protein sequence ID" value="CAJ82356.1"/>
    <property type="molecule type" value="mRNA"/>
</dbReference>
<dbReference type="EMBL" id="BC068217">
    <property type="protein sequence ID" value="AAH68217.1"/>
    <property type="molecule type" value="mRNA"/>
</dbReference>
<dbReference type="EMBL" id="BC082343">
    <property type="protein sequence ID" value="AAH82343.1"/>
    <property type="molecule type" value="mRNA"/>
</dbReference>
<dbReference type="RefSeq" id="NP_998884.1">
    <property type="nucleotide sequence ID" value="NM_213719.1"/>
</dbReference>
<dbReference type="SMR" id="Q6NVA9"/>
<dbReference type="FunCoup" id="Q6NVA9">
    <property type="interactions" value="2561"/>
</dbReference>
<dbReference type="STRING" id="8364.ENSXETP00000001302"/>
<dbReference type="PaxDb" id="8364-ENSXETP00000003955"/>
<dbReference type="DNASU" id="407952"/>
<dbReference type="GeneID" id="407952"/>
<dbReference type="KEGG" id="xtr:407952"/>
<dbReference type="AGR" id="Xenbase:XB-GENE-490883"/>
<dbReference type="CTD" id="60"/>
<dbReference type="Xenbase" id="XB-GENE-490883">
    <property type="gene designation" value="actb"/>
</dbReference>
<dbReference type="eggNOG" id="KOG0676">
    <property type="taxonomic scope" value="Eukaryota"/>
</dbReference>
<dbReference type="HOGENOM" id="CLU_027965_0_2_1"/>
<dbReference type="InParanoid" id="Q6NVA9"/>
<dbReference type="OMA" id="FHTTAER"/>
<dbReference type="OrthoDB" id="5132116at2759"/>
<dbReference type="PhylomeDB" id="Q6NVA9"/>
<dbReference type="TreeFam" id="TF354237"/>
<dbReference type="Reactome" id="R-XTR-114608">
    <property type="pathway name" value="Platelet degranulation"/>
</dbReference>
<dbReference type="Reactome" id="R-XTR-196025">
    <property type="pathway name" value="Formation of annular gap junctions"/>
</dbReference>
<dbReference type="Reactome" id="R-XTR-2029482">
    <property type="pathway name" value="Regulation of actin dynamics for phagocytic cup formation"/>
</dbReference>
<dbReference type="Reactome" id="R-XTR-437239">
    <property type="pathway name" value="Recycling pathway of L1"/>
</dbReference>
<dbReference type="Reactome" id="R-XTR-446353">
    <property type="pathway name" value="Cell-extracellular matrix interactions"/>
</dbReference>
<dbReference type="Reactome" id="R-XTR-5626467">
    <property type="pathway name" value="RHO GTPases activate IQGAPs"/>
</dbReference>
<dbReference type="Reactome" id="R-XTR-5663213">
    <property type="pathway name" value="RHO GTPases Activate WASPs and WAVEs"/>
</dbReference>
<dbReference type="Reactome" id="R-XTR-5663220">
    <property type="pathway name" value="RHO GTPases Activate Formins"/>
</dbReference>
<dbReference type="Reactome" id="R-XTR-9013418">
    <property type="pathway name" value="RHOBTB2 GTPase cycle"/>
</dbReference>
<dbReference type="Reactome" id="R-XTR-9035034">
    <property type="pathway name" value="RHOF GTPase cycle"/>
</dbReference>
<dbReference type="Proteomes" id="UP000008143">
    <property type="component" value="Chromosome 9"/>
</dbReference>
<dbReference type="Bgee" id="ENSXETG00000025116">
    <property type="expression patterns" value="Expressed in ectoderm-derived structure and 35 other cell types or tissues"/>
</dbReference>
<dbReference type="GO" id="GO:0015629">
    <property type="term" value="C:actin cytoskeleton"/>
    <property type="evidence" value="ECO:0000250"/>
    <property type="project" value="UniProtKB"/>
</dbReference>
<dbReference type="GO" id="GO:0005856">
    <property type="term" value="C:cytoskeleton"/>
    <property type="evidence" value="ECO:0000250"/>
    <property type="project" value="AgBase"/>
</dbReference>
<dbReference type="GO" id="GO:0097433">
    <property type="term" value="C:dense body"/>
    <property type="evidence" value="ECO:0000250"/>
    <property type="project" value="AgBase"/>
</dbReference>
<dbReference type="GO" id="GO:0005925">
    <property type="term" value="C:focal adhesion"/>
    <property type="evidence" value="ECO:0000250"/>
    <property type="project" value="AgBase"/>
</dbReference>
<dbReference type="GO" id="GO:0005634">
    <property type="term" value="C:nucleus"/>
    <property type="evidence" value="ECO:0000250"/>
    <property type="project" value="UniProtKB"/>
</dbReference>
<dbReference type="GO" id="GO:0005886">
    <property type="term" value="C:plasma membrane"/>
    <property type="evidence" value="ECO:0000250"/>
    <property type="project" value="AgBase"/>
</dbReference>
<dbReference type="GO" id="GO:0005524">
    <property type="term" value="F:ATP binding"/>
    <property type="evidence" value="ECO:0007669"/>
    <property type="project" value="UniProtKB-KW"/>
</dbReference>
<dbReference type="GO" id="GO:0016787">
    <property type="term" value="F:hydrolase activity"/>
    <property type="evidence" value="ECO:0007669"/>
    <property type="project" value="UniProtKB-KW"/>
</dbReference>
<dbReference type="CDD" id="cd10224">
    <property type="entry name" value="ASKHA_NBD_actin"/>
    <property type="match status" value="1"/>
</dbReference>
<dbReference type="FunFam" id="3.30.420.40:FF:000131">
    <property type="entry name" value="Actin, alpha skeletal muscle"/>
    <property type="match status" value="1"/>
</dbReference>
<dbReference type="FunFam" id="3.30.420.40:FF:000291">
    <property type="entry name" value="Actin, alpha skeletal muscle"/>
    <property type="match status" value="1"/>
</dbReference>
<dbReference type="FunFam" id="3.90.640.10:FF:000047">
    <property type="entry name" value="Actin, alpha skeletal muscle"/>
    <property type="match status" value="1"/>
</dbReference>
<dbReference type="FunFam" id="3.30.420.40:FF:000058">
    <property type="entry name" value="Putative actin-related protein 5"/>
    <property type="match status" value="1"/>
</dbReference>
<dbReference type="Gene3D" id="3.30.420.40">
    <property type="match status" value="2"/>
</dbReference>
<dbReference type="Gene3D" id="3.90.640.10">
    <property type="entry name" value="Actin, Chain A, domain 4"/>
    <property type="match status" value="1"/>
</dbReference>
<dbReference type="InterPro" id="IPR004000">
    <property type="entry name" value="Actin"/>
</dbReference>
<dbReference type="InterPro" id="IPR020902">
    <property type="entry name" value="Actin/actin-like_CS"/>
</dbReference>
<dbReference type="InterPro" id="IPR004001">
    <property type="entry name" value="Actin_CS"/>
</dbReference>
<dbReference type="InterPro" id="IPR043129">
    <property type="entry name" value="ATPase_NBD"/>
</dbReference>
<dbReference type="PANTHER" id="PTHR11937">
    <property type="entry name" value="ACTIN"/>
    <property type="match status" value="1"/>
</dbReference>
<dbReference type="Pfam" id="PF00022">
    <property type="entry name" value="Actin"/>
    <property type="match status" value="1"/>
</dbReference>
<dbReference type="PRINTS" id="PR00190">
    <property type="entry name" value="ACTIN"/>
</dbReference>
<dbReference type="SMART" id="SM00268">
    <property type="entry name" value="ACTIN"/>
    <property type="match status" value="1"/>
</dbReference>
<dbReference type="SUPFAM" id="SSF53067">
    <property type="entry name" value="Actin-like ATPase domain"/>
    <property type="match status" value="2"/>
</dbReference>
<dbReference type="PROSITE" id="PS00406">
    <property type="entry name" value="ACTINS_1"/>
    <property type="match status" value="1"/>
</dbReference>
<dbReference type="PROSITE" id="PS00432">
    <property type="entry name" value="ACTINS_2"/>
    <property type="match status" value="1"/>
</dbReference>
<dbReference type="PROSITE" id="PS01132">
    <property type="entry name" value="ACTINS_ACT_LIKE"/>
    <property type="match status" value="1"/>
</dbReference>
<evidence type="ECO:0000250" key="1">
    <source>
        <dbReference type="UniProtKB" id="O93400"/>
    </source>
</evidence>
<evidence type="ECO:0000250" key="2">
    <source>
        <dbReference type="UniProtKB" id="P60706"/>
    </source>
</evidence>
<evidence type="ECO:0000250" key="3">
    <source>
        <dbReference type="UniProtKB" id="P60709"/>
    </source>
</evidence>
<evidence type="ECO:0000250" key="4">
    <source>
        <dbReference type="UniProtKB" id="P60710"/>
    </source>
</evidence>
<evidence type="ECO:0000250" key="5">
    <source>
        <dbReference type="UniProtKB" id="P68137"/>
    </source>
</evidence>
<evidence type="ECO:0000305" key="6"/>
<comment type="function">
    <text evidence="3">Actin is a highly conserved protein that polymerizes to produce filaments that form cross-linked networks in the cytoplasm of cells. Actin exists in both monomeric (G-actin) and polymeric (F-actin) forms, both forms playing key functions, such as cell motility and contraction. In addition to their role in the cytoplasmic cytoskeleton, G- and F-actin also localize in the nucleus, and regulate gene transcription and motility and repair of damaged DNA.</text>
</comment>
<comment type="catalytic activity">
    <reaction evidence="5">
        <text>ATP + H2O = ADP + phosphate + H(+)</text>
        <dbReference type="Rhea" id="RHEA:13065"/>
        <dbReference type="ChEBI" id="CHEBI:15377"/>
        <dbReference type="ChEBI" id="CHEBI:15378"/>
        <dbReference type="ChEBI" id="CHEBI:30616"/>
        <dbReference type="ChEBI" id="CHEBI:43474"/>
        <dbReference type="ChEBI" id="CHEBI:456216"/>
    </reaction>
</comment>
<comment type="subunit">
    <text evidence="3 4">Polymerization of globular actin (G-actin) leads to a structural filament (F-actin) in the form of a two-stranded helix (By similarity). Each actin can bind to 4 others (By similarity).</text>
</comment>
<comment type="subcellular location">
    <subcellularLocation>
        <location evidence="4">Cytoplasm</location>
        <location evidence="4">Cytoskeleton</location>
    </subcellularLocation>
    <subcellularLocation>
        <location evidence="1">Nucleus</location>
    </subcellularLocation>
</comment>
<comment type="PTM">
    <molecule>Actin, cytoplasmic 1</molecule>
    <text evidence="3">N-terminal cleavage of acetylated methionine of immature cytoplasmic actin by ACTMAP.</text>
</comment>
<comment type="PTM">
    <text evidence="4">Oxidation of Met-44 and Met-47 by MICALs (mical1, mical2 or mical3) to form methionine sulfoxide promotes actin filament depolymerization. Mical1 and mical2 produce the (R)-S-oxide form. The (R)-S-oxide form is reverted by msrb1 and msrb2, which promote actin repolymerization.</text>
</comment>
<comment type="PTM">
    <text evidence="2">Methylation at His-73 by SETD3. Methylation stabilizes actin filaments.</text>
</comment>
<comment type="miscellaneous">
    <text evidence="1">In vertebrates 3 main groups of actin isoforms, alpha, beta and gamma have been identified. The alpha actins are found in muscle tissues and are a major constituent of the contractile apparatus. The beta and gamma actins coexist in most cell types as components of the cytoskeleton and as mediators of internal cell motility.</text>
</comment>
<comment type="similarity">
    <text evidence="6">Belongs to the actin family.</text>
</comment>